<dbReference type="EMBL" id="AF403027">
    <property type="protein sequence ID" value="AAL57346.1"/>
    <property type="molecule type" value="mRNA"/>
</dbReference>
<dbReference type="EMBL" id="AK297963">
    <property type="protein sequence ID" value="BAH12697.1"/>
    <property type="molecule type" value="mRNA"/>
</dbReference>
<dbReference type="EMBL" id="U47924">
    <property type="protein sequence ID" value="AAB51328.1"/>
    <property type="molecule type" value="Genomic_DNA"/>
</dbReference>
<dbReference type="EMBL" id="CH471116">
    <property type="protein sequence ID" value="EAW88719.1"/>
    <property type="molecule type" value="Genomic_DNA"/>
</dbReference>
<dbReference type="EMBL" id="CH471116">
    <property type="protein sequence ID" value="EAW88720.1"/>
    <property type="molecule type" value="Genomic_DNA"/>
</dbReference>
<dbReference type="EMBL" id="BC002983">
    <property type="protein sequence ID" value="AAH02983.1"/>
    <property type="molecule type" value="mRNA"/>
</dbReference>
<dbReference type="EMBL" id="BC071933">
    <property type="protein sequence ID" value="AAH71933.1"/>
    <property type="molecule type" value="mRNA"/>
</dbReference>
<dbReference type="CCDS" id="CCDS8567.1">
    <molecule id="Q99619-1"/>
</dbReference>
<dbReference type="RefSeq" id="NP_001139788.1">
    <molecule id="Q99619-1"/>
    <property type="nucleotide sequence ID" value="NM_001146316.2"/>
</dbReference>
<dbReference type="RefSeq" id="NP_001306599.1">
    <molecule id="Q99619-1"/>
    <property type="nucleotide sequence ID" value="NM_001319670.2"/>
</dbReference>
<dbReference type="RefSeq" id="NP_116030.1">
    <molecule id="Q99619-1"/>
    <property type="nucleotide sequence ID" value="NM_032641.4"/>
</dbReference>
<dbReference type="PDB" id="3EMW">
    <property type="method" value="X-ray"/>
    <property type="resolution" value="1.80 A"/>
    <property type="chains" value="A=26-219"/>
</dbReference>
<dbReference type="PDB" id="5XN3">
    <property type="method" value="X-ray"/>
    <property type="resolution" value="1.34 A"/>
    <property type="chains" value="A=22-220"/>
</dbReference>
<dbReference type="PDB" id="6DN5">
    <property type="method" value="X-ray"/>
    <property type="resolution" value="2.40 A"/>
    <property type="chains" value="A=26-219"/>
</dbReference>
<dbReference type="PDB" id="6DN6">
    <property type="method" value="X-ray"/>
    <property type="resolution" value="1.59 A"/>
    <property type="chains" value="A=26-219"/>
</dbReference>
<dbReference type="PDB" id="6JKJ">
    <property type="method" value="X-ray"/>
    <property type="resolution" value="1.90 A"/>
    <property type="chains" value="A/B=22-220"/>
</dbReference>
<dbReference type="PDB" id="6JWM">
    <property type="method" value="X-ray"/>
    <property type="resolution" value="1.23 A"/>
    <property type="chains" value="A=22-220"/>
</dbReference>
<dbReference type="PDB" id="6JWN">
    <property type="method" value="X-ray"/>
    <property type="resolution" value="1.61 A"/>
    <property type="chains" value="A/C=22-220"/>
</dbReference>
<dbReference type="PDB" id="6KEY">
    <property type="method" value="X-ray"/>
    <property type="resolution" value="1.24 A"/>
    <property type="chains" value="A=22-220"/>
</dbReference>
<dbReference type="PDBsum" id="3EMW"/>
<dbReference type="PDBsum" id="5XN3"/>
<dbReference type="PDBsum" id="6DN5"/>
<dbReference type="PDBsum" id="6DN6"/>
<dbReference type="PDBsum" id="6JKJ"/>
<dbReference type="PDBsum" id="6JWM"/>
<dbReference type="PDBsum" id="6JWN"/>
<dbReference type="PDBsum" id="6KEY"/>
<dbReference type="SMR" id="Q99619"/>
<dbReference type="BioGRID" id="124227">
    <property type="interactions" value="58"/>
</dbReference>
<dbReference type="ELM" id="Q99619"/>
<dbReference type="FunCoup" id="Q99619">
    <property type="interactions" value="31"/>
</dbReference>
<dbReference type="IntAct" id="Q99619">
    <property type="interactions" value="54"/>
</dbReference>
<dbReference type="MINT" id="Q99619"/>
<dbReference type="STRING" id="9606.ENSP00000428338"/>
<dbReference type="BindingDB" id="Q99619"/>
<dbReference type="ChEMBL" id="CHEMBL3325308"/>
<dbReference type="iPTMnet" id="Q99619"/>
<dbReference type="PhosphoSitePlus" id="Q99619"/>
<dbReference type="BioMuta" id="SPSB2"/>
<dbReference type="DMDM" id="74732788"/>
<dbReference type="MassIVE" id="Q99619"/>
<dbReference type="PaxDb" id="9606-ENSP00000428338"/>
<dbReference type="PeptideAtlas" id="Q99619"/>
<dbReference type="ProteomicsDB" id="6639"/>
<dbReference type="ProteomicsDB" id="78362">
    <molecule id="Q99619-1"/>
</dbReference>
<dbReference type="Antibodypedia" id="11257">
    <property type="antibodies" value="95 antibodies from 20 providers"/>
</dbReference>
<dbReference type="DNASU" id="84727"/>
<dbReference type="Ensembl" id="ENST00000519357.1">
    <molecule id="Q99619-2"/>
    <property type="protein sequence ID" value="ENSP00000431037.1"/>
    <property type="gene ID" value="ENSG00000111671.10"/>
</dbReference>
<dbReference type="Ensembl" id="ENST00000523102.5">
    <molecule id="Q99619-1"/>
    <property type="protein sequence ID" value="ENSP00000430872.1"/>
    <property type="gene ID" value="ENSG00000111671.10"/>
</dbReference>
<dbReference type="Ensembl" id="ENST00000524270.6">
    <molecule id="Q99619-1"/>
    <property type="protein sequence ID" value="ENSP00000428338.1"/>
    <property type="gene ID" value="ENSG00000111671.10"/>
</dbReference>
<dbReference type="GeneID" id="84727"/>
<dbReference type="KEGG" id="hsa:84727"/>
<dbReference type="MANE-Select" id="ENST00000524270.6">
    <property type="protein sequence ID" value="ENSP00000428338.1"/>
    <property type="RefSeq nucleotide sequence ID" value="NM_032641.4"/>
    <property type="RefSeq protein sequence ID" value="NP_116030.1"/>
</dbReference>
<dbReference type="UCSC" id="uc001qrl.4">
    <molecule id="Q99619-1"/>
    <property type="organism name" value="human"/>
</dbReference>
<dbReference type="AGR" id="HGNC:29522"/>
<dbReference type="CTD" id="84727"/>
<dbReference type="DisGeNET" id="84727"/>
<dbReference type="GeneCards" id="SPSB2"/>
<dbReference type="HGNC" id="HGNC:29522">
    <property type="gene designation" value="SPSB2"/>
</dbReference>
<dbReference type="HPA" id="ENSG00000111671">
    <property type="expression patterns" value="Low tissue specificity"/>
</dbReference>
<dbReference type="MIM" id="611658">
    <property type="type" value="gene"/>
</dbReference>
<dbReference type="neXtProt" id="NX_Q99619"/>
<dbReference type="OpenTargets" id="ENSG00000111671"/>
<dbReference type="PharmGKB" id="PA142670872"/>
<dbReference type="VEuPathDB" id="HostDB:ENSG00000111671"/>
<dbReference type="eggNOG" id="KOG3953">
    <property type="taxonomic scope" value="Eukaryota"/>
</dbReference>
<dbReference type="GeneTree" id="ENSGT01030000234629"/>
<dbReference type="HOGENOM" id="CLU_046756_0_0_1"/>
<dbReference type="InParanoid" id="Q99619"/>
<dbReference type="OMA" id="HAWEIGW"/>
<dbReference type="OrthoDB" id="5547302at2759"/>
<dbReference type="PAN-GO" id="Q99619">
    <property type="GO annotations" value="2 GO annotations based on evolutionary models"/>
</dbReference>
<dbReference type="PhylomeDB" id="Q99619"/>
<dbReference type="TreeFam" id="TF312822"/>
<dbReference type="PathwayCommons" id="Q99619"/>
<dbReference type="Reactome" id="R-HSA-8951664">
    <property type="pathway name" value="Neddylation"/>
</dbReference>
<dbReference type="Reactome" id="R-HSA-983168">
    <property type="pathway name" value="Antigen processing: Ubiquitination &amp; Proteasome degradation"/>
</dbReference>
<dbReference type="SignaLink" id="Q99619"/>
<dbReference type="SIGNOR" id="Q99619"/>
<dbReference type="UniPathway" id="UPA00143"/>
<dbReference type="BioGRID-ORCS" id="84727">
    <property type="hits" value="14 hits in 1154 CRISPR screens"/>
</dbReference>
<dbReference type="ChiTaRS" id="SPSB2">
    <property type="organism name" value="human"/>
</dbReference>
<dbReference type="EvolutionaryTrace" id="Q99619"/>
<dbReference type="GenomeRNAi" id="84727"/>
<dbReference type="Pharos" id="Q99619">
    <property type="development level" value="Tbio"/>
</dbReference>
<dbReference type="PRO" id="PR:Q99619"/>
<dbReference type="Proteomes" id="UP000005640">
    <property type="component" value="Chromosome 12"/>
</dbReference>
<dbReference type="RNAct" id="Q99619">
    <property type="molecule type" value="protein"/>
</dbReference>
<dbReference type="Bgee" id="ENSG00000111671">
    <property type="expression patterns" value="Expressed in primordial germ cell in gonad and 131 other cell types or tissues"/>
</dbReference>
<dbReference type="ExpressionAtlas" id="Q99619">
    <property type="expression patterns" value="baseline and differential"/>
</dbReference>
<dbReference type="GO" id="GO:0005829">
    <property type="term" value="C:cytosol"/>
    <property type="evidence" value="ECO:0000314"/>
    <property type="project" value="UniProtKB"/>
</dbReference>
<dbReference type="GO" id="GO:0019005">
    <property type="term" value="C:SCF ubiquitin ligase complex"/>
    <property type="evidence" value="ECO:0000318"/>
    <property type="project" value="GO_Central"/>
</dbReference>
<dbReference type="GO" id="GO:1990756">
    <property type="term" value="F:ubiquitin-like ligase-substrate adaptor activity"/>
    <property type="evidence" value="ECO:0000353"/>
    <property type="project" value="UniProtKB"/>
</dbReference>
<dbReference type="GO" id="GO:0035556">
    <property type="term" value="P:intracellular signal transduction"/>
    <property type="evidence" value="ECO:0007669"/>
    <property type="project" value="InterPro"/>
</dbReference>
<dbReference type="GO" id="GO:0043161">
    <property type="term" value="P:proteasome-mediated ubiquitin-dependent protein catabolic process"/>
    <property type="evidence" value="ECO:0000318"/>
    <property type="project" value="GO_Central"/>
</dbReference>
<dbReference type="GO" id="GO:0016567">
    <property type="term" value="P:protein ubiquitination"/>
    <property type="evidence" value="ECO:0000314"/>
    <property type="project" value="UniProtKB"/>
</dbReference>
<dbReference type="GO" id="GO:0006511">
    <property type="term" value="P:ubiquitin-dependent protein catabolic process"/>
    <property type="evidence" value="ECO:0000314"/>
    <property type="project" value="UniProtKB"/>
</dbReference>
<dbReference type="CDD" id="cd03719">
    <property type="entry name" value="SOCS_SSB2"/>
    <property type="match status" value="1"/>
</dbReference>
<dbReference type="CDD" id="cd12906">
    <property type="entry name" value="SPRY_SOCS1-2-4"/>
    <property type="match status" value="1"/>
</dbReference>
<dbReference type="FunFam" id="1.10.750.20:FF:000001">
    <property type="entry name" value="Ankyrin repeat and SOCS box containing 1"/>
    <property type="match status" value="1"/>
</dbReference>
<dbReference type="FunFam" id="2.60.120.920:FF:000048">
    <property type="entry name" value="SPRY domain-containing SOCS box protein 2"/>
    <property type="match status" value="1"/>
</dbReference>
<dbReference type="Gene3D" id="2.60.120.920">
    <property type="match status" value="1"/>
</dbReference>
<dbReference type="Gene3D" id="1.10.750.20">
    <property type="entry name" value="SOCS box"/>
    <property type="match status" value="1"/>
</dbReference>
<dbReference type="InterPro" id="IPR001870">
    <property type="entry name" value="B30.2/SPRY"/>
</dbReference>
<dbReference type="InterPro" id="IPR043136">
    <property type="entry name" value="B30.2/SPRY_sf"/>
</dbReference>
<dbReference type="InterPro" id="IPR013320">
    <property type="entry name" value="ConA-like_dom_sf"/>
</dbReference>
<dbReference type="InterPro" id="IPR050672">
    <property type="entry name" value="FBXO45-Fsn/SPSB_families"/>
</dbReference>
<dbReference type="InterPro" id="IPR001496">
    <property type="entry name" value="SOCS_box"/>
</dbReference>
<dbReference type="InterPro" id="IPR036036">
    <property type="entry name" value="SOCS_box-like_dom_sf"/>
</dbReference>
<dbReference type="InterPro" id="IPR003877">
    <property type="entry name" value="SPRY_dom"/>
</dbReference>
<dbReference type="InterPro" id="IPR037340">
    <property type="entry name" value="SSB2_SOCS"/>
</dbReference>
<dbReference type="PANTHER" id="PTHR12245">
    <property type="entry name" value="SPRY DOMAIN CONTAINING SOCS BOX PROTEIN"/>
    <property type="match status" value="1"/>
</dbReference>
<dbReference type="PANTHER" id="PTHR12245:SF2">
    <property type="entry name" value="SPRY DOMAIN-CONTAINING SOCS BOX PROTEIN 2"/>
    <property type="match status" value="1"/>
</dbReference>
<dbReference type="Pfam" id="PF07525">
    <property type="entry name" value="SOCS_box"/>
    <property type="match status" value="1"/>
</dbReference>
<dbReference type="Pfam" id="PF00622">
    <property type="entry name" value="SPRY"/>
    <property type="match status" value="1"/>
</dbReference>
<dbReference type="SMART" id="SM00253">
    <property type="entry name" value="SOCS"/>
    <property type="match status" value="1"/>
</dbReference>
<dbReference type="SMART" id="SM00969">
    <property type="entry name" value="SOCS_box"/>
    <property type="match status" value="1"/>
</dbReference>
<dbReference type="SMART" id="SM00449">
    <property type="entry name" value="SPRY"/>
    <property type="match status" value="1"/>
</dbReference>
<dbReference type="SUPFAM" id="SSF49899">
    <property type="entry name" value="Concanavalin A-like lectins/glucanases"/>
    <property type="match status" value="1"/>
</dbReference>
<dbReference type="SUPFAM" id="SSF158235">
    <property type="entry name" value="SOCS box-like"/>
    <property type="match status" value="1"/>
</dbReference>
<dbReference type="PROSITE" id="PS50188">
    <property type="entry name" value="B302_SPRY"/>
    <property type="match status" value="1"/>
</dbReference>
<dbReference type="PROSITE" id="PS50225">
    <property type="entry name" value="SOCS"/>
    <property type="match status" value="1"/>
</dbReference>
<organism>
    <name type="scientific">Homo sapiens</name>
    <name type="common">Human</name>
    <dbReference type="NCBI Taxonomy" id="9606"/>
    <lineage>
        <taxon>Eukaryota</taxon>
        <taxon>Metazoa</taxon>
        <taxon>Chordata</taxon>
        <taxon>Craniata</taxon>
        <taxon>Vertebrata</taxon>
        <taxon>Euteleostomi</taxon>
        <taxon>Mammalia</taxon>
        <taxon>Eutheria</taxon>
        <taxon>Euarchontoglires</taxon>
        <taxon>Primates</taxon>
        <taxon>Haplorrhini</taxon>
        <taxon>Catarrhini</taxon>
        <taxon>Hominidae</taxon>
        <taxon>Homo</taxon>
    </lineage>
</organism>
<keyword id="KW-0002">3D-structure</keyword>
<keyword id="KW-0025">Alternative splicing</keyword>
<keyword id="KW-0963">Cytoplasm</keyword>
<keyword id="KW-0945">Host-virus interaction</keyword>
<keyword id="KW-1267">Proteomics identification</keyword>
<keyword id="KW-1185">Reference proteome</keyword>
<keyword id="KW-0833">Ubl conjugation pathway</keyword>
<sequence length="263" mass="28630">MGQTALAGGSSSTPTPQALYPDLSCPEGLEELLSAPPPDLGAQRRHGWNPKDCSENIEVKEGGLYFERRPVAQSTDGARGKRGYSRGLHAWEISWPLEQRGTHAVVGVATALAPLQTDHYAALLGSNSESWGWDIGRGKLYHQSKGPGAPQYPAGTQGEQLEVPERLLVVLDMEEGTLGYAIGGTYLGPAFRGLKGRTLYPAVSAVWGQCQVRIRYLGERRAEPHSLLHLSRLCVRHNLGDTRLGQVSALPLPPAMKRYLLYQ</sequence>
<reference key="1">
    <citation type="submission" date="2001-07" db="EMBL/GenBank/DDBJ databases">
        <title>SOCS box proteins.</title>
        <authorList>
            <person name="Friedel E.J."/>
            <person name="Nicholson S.E."/>
            <person name="Nicola N.A."/>
            <person name="Kile B.T."/>
            <person name="Hilton D.J."/>
        </authorList>
    </citation>
    <scope>NUCLEOTIDE SEQUENCE [MRNA] (ISOFORM 1)</scope>
</reference>
<reference key="2">
    <citation type="journal article" date="2004" name="Nat. Genet.">
        <title>Complete sequencing and characterization of 21,243 full-length human cDNAs.</title>
        <authorList>
            <person name="Ota T."/>
            <person name="Suzuki Y."/>
            <person name="Nishikawa T."/>
            <person name="Otsuki T."/>
            <person name="Sugiyama T."/>
            <person name="Irie R."/>
            <person name="Wakamatsu A."/>
            <person name="Hayashi K."/>
            <person name="Sato H."/>
            <person name="Nagai K."/>
            <person name="Kimura K."/>
            <person name="Makita H."/>
            <person name="Sekine M."/>
            <person name="Obayashi M."/>
            <person name="Nishi T."/>
            <person name="Shibahara T."/>
            <person name="Tanaka T."/>
            <person name="Ishii S."/>
            <person name="Yamamoto J."/>
            <person name="Saito K."/>
            <person name="Kawai Y."/>
            <person name="Isono Y."/>
            <person name="Nakamura Y."/>
            <person name="Nagahari K."/>
            <person name="Murakami K."/>
            <person name="Yasuda T."/>
            <person name="Iwayanagi T."/>
            <person name="Wagatsuma M."/>
            <person name="Shiratori A."/>
            <person name="Sudo H."/>
            <person name="Hosoiri T."/>
            <person name="Kaku Y."/>
            <person name="Kodaira H."/>
            <person name="Kondo H."/>
            <person name="Sugawara M."/>
            <person name="Takahashi M."/>
            <person name="Kanda K."/>
            <person name="Yokoi T."/>
            <person name="Furuya T."/>
            <person name="Kikkawa E."/>
            <person name="Omura Y."/>
            <person name="Abe K."/>
            <person name="Kamihara K."/>
            <person name="Katsuta N."/>
            <person name="Sato K."/>
            <person name="Tanikawa M."/>
            <person name="Yamazaki M."/>
            <person name="Ninomiya K."/>
            <person name="Ishibashi T."/>
            <person name="Yamashita H."/>
            <person name="Murakawa K."/>
            <person name="Fujimori K."/>
            <person name="Tanai H."/>
            <person name="Kimata M."/>
            <person name="Watanabe M."/>
            <person name="Hiraoka S."/>
            <person name="Chiba Y."/>
            <person name="Ishida S."/>
            <person name="Ono Y."/>
            <person name="Takiguchi S."/>
            <person name="Watanabe S."/>
            <person name="Yosida M."/>
            <person name="Hotuta T."/>
            <person name="Kusano J."/>
            <person name="Kanehori K."/>
            <person name="Takahashi-Fujii A."/>
            <person name="Hara H."/>
            <person name="Tanase T.-O."/>
            <person name="Nomura Y."/>
            <person name="Togiya S."/>
            <person name="Komai F."/>
            <person name="Hara R."/>
            <person name="Takeuchi K."/>
            <person name="Arita M."/>
            <person name="Imose N."/>
            <person name="Musashino K."/>
            <person name="Yuuki H."/>
            <person name="Oshima A."/>
            <person name="Sasaki N."/>
            <person name="Aotsuka S."/>
            <person name="Yoshikawa Y."/>
            <person name="Matsunawa H."/>
            <person name="Ichihara T."/>
            <person name="Shiohata N."/>
            <person name="Sano S."/>
            <person name="Moriya S."/>
            <person name="Momiyama H."/>
            <person name="Satoh N."/>
            <person name="Takami S."/>
            <person name="Terashima Y."/>
            <person name="Suzuki O."/>
            <person name="Nakagawa S."/>
            <person name="Senoh A."/>
            <person name="Mizoguchi H."/>
            <person name="Goto Y."/>
            <person name="Shimizu F."/>
            <person name="Wakebe H."/>
            <person name="Hishigaki H."/>
            <person name="Watanabe T."/>
            <person name="Sugiyama A."/>
            <person name="Takemoto M."/>
            <person name="Kawakami B."/>
            <person name="Yamazaki M."/>
            <person name="Watanabe K."/>
            <person name="Kumagai A."/>
            <person name="Itakura S."/>
            <person name="Fukuzumi Y."/>
            <person name="Fujimori Y."/>
            <person name="Komiyama M."/>
            <person name="Tashiro H."/>
            <person name="Tanigami A."/>
            <person name="Fujiwara T."/>
            <person name="Ono T."/>
            <person name="Yamada K."/>
            <person name="Fujii Y."/>
            <person name="Ozaki K."/>
            <person name="Hirao M."/>
            <person name="Ohmori Y."/>
            <person name="Kawabata A."/>
            <person name="Hikiji T."/>
            <person name="Kobatake N."/>
            <person name="Inagaki H."/>
            <person name="Ikema Y."/>
            <person name="Okamoto S."/>
            <person name="Okitani R."/>
            <person name="Kawakami T."/>
            <person name="Noguchi S."/>
            <person name="Itoh T."/>
            <person name="Shigeta K."/>
            <person name="Senba T."/>
            <person name="Matsumura K."/>
            <person name="Nakajima Y."/>
            <person name="Mizuno T."/>
            <person name="Morinaga M."/>
            <person name="Sasaki M."/>
            <person name="Togashi T."/>
            <person name="Oyama M."/>
            <person name="Hata H."/>
            <person name="Watanabe M."/>
            <person name="Komatsu T."/>
            <person name="Mizushima-Sugano J."/>
            <person name="Satoh T."/>
            <person name="Shirai Y."/>
            <person name="Takahashi Y."/>
            <person name="Nakagawa K."/>
            <person name="Okumura K."/>
            <person name="Nagase T."/>
            <person name="Nomura N."/>
            <person name="Kikuchi H."/>
            <person name="Masuho Y."/>
            <person name="Yamashita R."/>
            <person name="Nakai K."/>
            <person name="Yada T."/>
            <person name="Nakamura Y."/>
            <person name="Ohara O."/>
            <person name="Isogai T."/>
            <person name="Sugano S."/>
        </authorList>
    </citation>
    <scope>NUCLEOTIDE SEQUENCE [LARGE SCALE MRNA] (ISOFORM 2)</scope>
</reference>
<reference key="3">
    <citation type="journal article" date="1997" name="Genome Res.">
        <title>Large-scale sequencing in human chromosome 12p13: experimental and computational gene structure determination.</title>
        <authorList>
            <person name="Ansari-Lari M.A."/>
            <person name="Shen Y."/>
            <person name="Muzny D.M."/>
            <person name="Lee W."/>
            <person name="Gibbs R.A."/>
        </authorList>
    </citation>
    <scope>NUCLEOTIDE SEQUENCE [LARGE SCALE GENOMIC DNA]</scope>
</reference>
<reference key="4">
    <citation type="journal article" date="2006" name="Nature">
        <title>The finished DNA sequence of human chromosome 12.</title>
        <authorList>
            <person name="Scherer S.E."/>
            <person name="Muzny D.M."/>
            <person name="Buhay C.J."/>
            <person name="Chen R."/>
            <person name="Cree A."/>
            <person name="Ding Y."/>
            <person name="Dugan-Rocha S."/>
            <person name="Gill R."/>
            <person name="Gunaratne P."/>
            <person name="Harris R.A."/>
            <person name="Hawes A.C."/>
            <person name="Hernandez J."/>
            <person name="Hodgson A.V."/>
            <person name="Hume J."/>
            <person name="Jackson A."/>
            <person name="Khan Z.M."/>
            <person name="Kovar-Smith C."/>
            <person name="Lewis L.R."/>
            <person name="Lozado R.J."/>
            <person name="Metzker M.L."/>
            <person name="Milosavljevic A."/>
            <person name="Miner G.R."/>
            <person name="Montgomery K.T."/>
            <person name="Morgan M.B."/>
            <person name="Nazareth L.V."/>
            <person name="Scott G."/>
            <person name="Sodergren E."/>
            <person name="Song X.-Z."/>
            <person name="Steffen D."/>
            <person name="Lovering R.C."/>
            <person name="Wheeler D.A."/>
            <person name="Worley K.C."/>
            <person name="Yuan Y."/>
            <person name="Zhang Z."/>
            <person name="Adams C.Q."/>
            <person name="Ansari-Lari M.A."/>
            <person name="Ayele M."/>
            <person name="Brown M.J."/>
            <person name="Chen G."/>
            <person name="Chen Z."/>
            <person name="Clerc-Blankenburg K.P."/>
            <person name="Davis C."/>
            <person name="Delgado O."/>
            <person name="Dinh H.H."/>
            <person name="Draper H."/>
            <person name="Gonzalez-Garay M.L."/>
            <person name="Havlak P."/>
            <person name="Jackson L.R."/>
            <person name="Jacob L.S."/>
            <person name="Kelly S.H."/>
            <person name="Li L."/>
            <person name="Li Z."/>
            <person name="Liu J."/>
            <person name="Liu W."/>
            <person name="Lu J."/>
            <person name="Maheshwari M."/>
            <person name="Nguyen B.-V."/>
            <person name="Okwuonu G.O."/>
            <person name="Pasternak S."/>
            <person name="Perez L.M."/>
            <person name="Plopper F.J.H."/>
            <person name="Santibanez J."/>
            <person name="Shen H."/>
            <person name="Tabor P.E."/>
            <person name="Verduzco D."/>
            <person name="Waldron L."/>
            <person name="Wang Q."/>
            <person name="Williams G.A."/>
            <person name="Zhang J."/>
            <person name="Zhou J."/>
            <person name="Allen C.C."/>
            <person name="Amin A.G."/>
            <person name="Anyalebechi V."/>
            <person name="Bailey M."/>
            <person name="Barbaria J.A."/>
            <person name="Bimage K.E."/>
            <person name="Bryant N.P."/>
            <person name="Burch P.E."/>
            <person name="Burkett C.E."/>
            <person name="Burrell K.L."/>
            <person name="Calderon E."/>
            <person name="Cardenas V."/>
            <person name="Carter K."/>
            <person name="Casias K."/>
            <person name="Cavazos I."/>
            <person name="Cavazos S.R."/>
            <person name="Ceasar H."/>
            <person name="Chacko J."/>
            <person name="Chan S.N."/>
            <person name="Chavez D."/>
            <person name="Christopoulos C."/>
            <person name="Chu J."/>
            <person name="Cockrell R."/>
            <person name="Cox C.D."/>
            <person name="Dang M."/>
            <person name="Dathorne S.R."/>
            <person name="David R."/>
            <person name="Davis C.M."/>
            <person name="Davy-Carroll L."/>
            <person name="Deshazo D.R."/>
            <person name="Donlin J.E."/>
            <person name="D'Souza L."/>
            <person name="Eaves K.A."/>
            <person name="Egan A."/>
            <person name="Emery-Cohen A.J."/>
            <person name="Escotto M."/>
            <person name="Flagg N."/>
            <person name="Forbes L.D."/>
            <person name="Gabisi A.M."/>
            <person name="Garza M."/>
            <person name="Hamilton C."/>
            <person name="Henderson N."/>
            <person name="Hernandez O."/>
            <person name="Hines S."/>
            <person name="Hogues M.E."/>
            <person name="Huang M."/>
            <person name="Idlebird D.G."/>
            <person name="Johnson R."/>
            <person name="Jolivet A."/>
            <person name="Jones S."/>
            <person name="Kagan R."/>
            <person name="King L.M."/>
            <person name="Leal B."/>
            <person name="Lebow H."/>
            <person name="Lee S."/>
            <person name="LeVan J.M."/>
            <person name="Lewis L.C."/>
            <person name="London P."/>
            <person name="Lorensuhewa L.M."/>
            <person name="Loulseged H."/>
            <person name="Lovett D.A."/>
            <person name="Lucier A."/>
            <person name="Lucier R.L."/>
            <person name="Ma J."/>
            <person name="Madu R.C."/>
            <person name="Mapua P."/>
            <person name="Martindale A.D."/>
            <person name="Martinez E."/>
            <person name="Massey E."/>
            <person name="Mawhiney S."/>
            <person name="Meador M.G."/>
            <person name="Mendez S."/>
            <person name="Mercado C."/>
            <person name="Mercado I.C."/>
            <person name="Merritt C.E."/>
            <person name="Miner Z.L."/>
            <person name="Minja E."/>
            <person name="Mitchell T."/>
            <person name="Mohabbat F."/>
            <person name="Mohabbat K."/>
            <person name="Montgomery B."/>
            <person name="Moore N."/>
            <person name="Morris S."/>
            <person name="Munidasa M."/>
            <person name="Ngo R.N."/>
            <person name="Nguyen N.B."/>
            <person name="Nickerson E."/>
            <person name="Nwaokelemeh O.O."/>
            <person name="Nwokenkwo S."/>
            <person name="Obregon M."/>
            <person name="Oguh M."/>
            <person name="Oragunye N."/>
            <person name="Oviedo R.J."/>
            <person name="Parish B.J."/>
            <person name="Parker D.N."/>
            <person name="Parrish J."/>
            <person name="Parks K.L."/>
            <person name="Paul H.A."/>
            <person name="Payton B.A."/>
            <person name="Perez A."/>
            <person name="Perrin W."/>
            <person name="Pickens A."/>
            <person name="Primus E.L."/>
            <person name="Pu L.-L."/>
            <person name="Puazo M."/>
            <person name="Quiles M.M."/>
            <person name="Quiroz J.B."/>
            <person name="Rabata D."/>
            <person name="Reeves K."/>
            <person name="Ruiz S.J."/>
            <person name="Shao H."/>
            <person name="Sisson I."/>
            <person name="Sonaike T."/>
            <person name="Sorelle R.P."/>
            <person name="Sutton A.E."/>
            <person name="Svatek A.F."/>
            <person name="Svetz L.A."/>
            <person name="Tamerisa K.S."/>
            <person name="Taylor T.R."/>
            <person name="Teague B."/>
            <person name="Thomas N."/>
            <person name="Thorn R.D."/>
            <person name="Trejos Z.Y."/>
            <person name="Trevino B.K."/>
            <person name="Ukegbu O.N."/>
            <person name="Urban J.B."/>
            <person name="Vasquez L.I."/>
            <person name="Vera V.A."/>
            <person name="Villasana D.M."/>
            <person name="Wang L."/>
            <person name="Ward-Moore S."/>
            <person name="Warren J.T."/>
            <person name="Wei X."/>
            <person name="White F."/>
            <person name="Williamson A.L."/>
            <person name="Wleczyk R."/>
            <person name="Wooden H.S."/>
            <person name="Wooden S.H."/>
            <person name="Yen J."/>
            <person name="Yoon L."/>
            <person name="Yoon V."/>
            <person name="Zorrilla S.E."/>
            <person name="Nelson D."/>
            <person name="Kucherlapati R."/>
            <person name="Weinstock G."/>
            <person name="Gibbs R.A."/>
        </authorList>
    </citation>
    <scope>NUCLEOTIDE SEQUENCE [LARGE SCALE GENOMIC DNA]</scope>
</reference>
<reference key="5">
    <citation type="submission" date="2005-09" db="EMBL/GenBank/DDBJ databases">
        <authorList>
            <person name="Mural R.J."/>
            <person name="Istrail S."/>
            <person name="Sutton G.G."/>
            <person name="Florea L."/>
            <person name="Halpern A.L."/>
            <person name="Mobarry C.M."/>
            <person name="Lippert R."/>
            <person name="Walenz B."/>
            <person name="Shatkay H."/>
            <person name="Dew I."/>
            <person name="Miller J.R."/>
            <person name="Flanigan M.J."/>
            <person name="Edwards N.J."/>
            <person name="Bolanos R."/>
            <person name="Fasulo D."/>
            <person name="Halldorsson B.V."/>
            <person name="Hannenhalli S."/>
            <person name="Turner R."/>
            <person name="Yooseph S."/>
            <person name="Lu F."/>
            <person name="Nusskern D.R."/>
            <person name="Shue B.C."/>
            <person name="Zheng X.H."/>
            <person name="Zhong F."/>
            <person name="Delcher A.L."/>
            <person name="Huson D.H."/>
            <person name="Kravitz S.A."/>
            <person name="Mouchard L."/>
            <person name="Reinert K."/>
            <person name="Remington K.A."/>
            <person name="Clark A.G."/>
            <person name="Waterman M.S."/>
            <person name="Eichler E.E."/>
            <person name="Adams M.D."/>
            <person name="Hunkapiller M.W."/>
            <person name="Myers E.W."/>
            <person name="Venter J.C."/>
        </authorList>
    </citation>
    <scope>NUCLEOTIDE SEQUENCE [LARGE SCALE GENOMIC DNA]</scope>
</reference>
<reference key="6">
    <citation type="journal article" date="2004" name="Genome Res.">
        <title>The status, quality, and expansion of the NIH full-length cDNA project: the Mammalian Gene Collection (MGC).</title>
        <authorList>
            <consortium name="The MGC Project Team"/>
        </authorList>
    </citation>
    <scope>NUCLEOTIDE SEQUENCE [LARGE SCALE MRNA] (ISOFORM 1)</scope>
    <source>
        <tissue>Placenta</tissue>
        <tissue>Spleen</tissue>
    </source>
</reference>
<reference key="7">
    <citation type="journal article" date="2004" name="Genes Dev.">
        <title>VHL-box and SOCS-box domains determine binding specificity for Cul2-Rbx1 and Cul5-Rbx2 modules of ubiquitin ligases.</title>
        <authorList>
            <person name="Kamura T."/>
            <person name="Maenaka K."/>
            <person name="Kotoshiba S."/>
            <person name="Matsumoto M."/>
            <person name="Kohda D."/>
            <person name="Conaway R.C."/>
            <person name="Conaway J.W."/>
            <person name="Nakayama K.I."/>
        </authorList>
    </citation>
    <scope>FUNCTION IN AN E3 UBIQUITIN-PROTEIN LIGASE COMPLEX</scope>
    <scope>IDENTIFICATION BY MASS SPECTROMETRY</scope>
    <scope>INTERACTION WITH CUL5; RNF7; ELOB AND ELOC</scope>
</reference>
<reference key="8">
    <citation type="journal article" date="2005" name="J. Biol. Chem.">
        <title>The SPRY domain-containing SOCS box protein 1 (SSB-1) interacts with MET and enhances the hepatocyte growth factor-induced Erk-Elk-1-serum response element pathway.</title>
        <authorList>
            <person name="Wang D."/>
            <person name="Li Z."/>
            <person name="Messing E.M."/>
            <person name="Wu G."/>
        </authorList>
    </citation>
    <scope>INTERACTION WITH MET</scope>
</reference>
<reference key="9">
    <citation type="journal article" date="2006" name="EMBO J.">
        <title>Structural and functional insights into the B30.2/SPRY domain.</title>
        <authorList>
            <person name="Woo J.S."/>
            <person name="Imm J.H."/>
            <person name="Min C.K."/>
            <person name="Kim K.J."/>
            <person name="Cha S.S."/>
            <person name="Oh B.H."/>
        </authorList>
    </citation>
    <scope>INTERACTION WITH PAWR</scope>
    <scope>MUTAGENESIS OF 116-GLN--GLY-119</scope>
</reference>
<reference key="10">
    <citation type="journal article" date="2011" name="J. Biol. Chem.">
        <title>Regulation of inducible nitric-oxide synthase by the SPRY domain- and SOCS box-containing proteins.</title>
        <authorList>
            <person name="Nishiya T."/>
            <person name="Matsumoto K."/>
            <person name="Maekawa S."/>
            <person name="Kajita E."/>
            <person name="Horinouchi T."/>
            <person name="Fujimuro M."/>
            <person name="Ogasawara K."/>
            <person name="Uehara T."/>
            <person name="Miwa S."/>
        </authorList>
    </citation>
    <scope>FUNCTION</scope>
    <scope>INTERACTION WITH NOS2</scope>
    <scope>SUBCELLULAR LOCATION</scope>
    <scope>DOMAIN SOCS BOX</scope>
</reference>
<reference key="11">
    <citation type="journal article" date="2019" name="PLoS ONE">
        <title>SPSB2 inhibits hepatitis C virus replication by targeting NS5A for ubiquitination and degradation.</title>
        <authorList>
            <person name="Wang M."/>
            <person name="Wang Y."/>
            <person name="Liu Y."/>
            <person name="Wang H."/>
            <person name="Xin X."/>
            <person name="Li J."/>
            <person name="Hao Y."/>
            <person name="Han L."/>
            <person name="Yu F."/>
            <person name="Zheng C."/>
            <person name="Shen C."/>
        </authorList>
    </citation>
    <scope>INTERACTION WITH HCV ENVELOPE GLYCOPROTEIN E1 (MICROBIAL INFECTION)</scope>
    <scope>INTERACTION WITH HCV NON-STRUCTURAL PROTEIN 5A (MICROBIAL INFECTION)</scope>
</reference>
<reference evidence="13" key="12">
    <citation type="journal article" date="2010" name="J. Mol. Biol.">
        <title>Structural basis for Par-4 recognition by the SPRY domain- and SOCS box-containing proteins SPSB1, SPSB2, and SPSB4.</title>
        <authorList>
            <person name="Filippakopoulos P."/>
            <person name="Low A."/>
            <person name="Sharpe T.D."/>
            <person name="Uppenberg J."/>
            <person name="Yao S."/>
            <person name="Kuang Z."/>
            <person name="Savitsky P."/>
            <person name="Lewis R.S."/>
            <person name="Nicholson S.E."/>
            <person name="Norton R.S."/>
            <person name="Bullock A.N."/>
        </authorList>
    </citation>
    <scope>X-RAY CRYSTALLOGRAPHY (1.80 ANGSTROMS) OF 26-219 IN COMPLEX WITH DROSOPHILA VAS</scope>
    <scope>INTERACTION WITH PAWR</scope>
</reference>
<proteinExistence type="evidence at protein level"/>
<protein>
    <recommendedName>
        <fullName>SPRY domain-containing SOCS box protein 2</fullName>
        <shortName>SSB-2</shortName>
    </recommendedName>
    <alternativeName>
        <fullName>Gene-rich cluster protein C9</fullName>
    </alternativeName>
</protein>
<evidence type="ECO:0000250" key="1"/>
<evidence type="ECO:0000255" key="2">
    <source>
        <dbReference type="PROSITE-ProRule" id="PRU00194"/>
    </source>
</evidence>
<evidence type="ECO:0000255" key="3">
    <source>
        <dbReference type="PROSITE-ProRule" id="PRU00548"/>
    </source>
</evidence>
<evidence type="ECO:0000256" key="4">
    <source>
        <dbReference type="SAM" id="MobiDB-lite"/>
    </source>
</evidence>
<evidence type="ECO:0000269" key="5">
    <source>
    </source>
</evidence>
<evidence type="ECO:0000269" key="6">
    <source>
    </source>
</evidence>
<evidence type="ECO:0000269" key="7">
    <source>
    </source>
</evidence>
<evidence type="ECO:0000269" key="8">
    <source>
    </source>
</evidence>
<evidence type="ECO:0000269" key="9">
    <source>
    </source>
</evidence>
<evidence type="ECO:0000269" key="10">
    <source>
    </source>
</evidence>
<evidence type="ECO:0000303" key="11">
    <source>
    </source>
</evidence>
<evidence type="ECO:0000305" key="12"/>
<evidence type="ECO:0007744" key="13">
    <source>
        <dbReference type="PDB" id="3EMW"/>
    </source>
</evidence>
<evidence type="ECO:0007829" key="14">
    <source>
        <dbReference type="PDB" id="6JWM"/>
    </source>
</evidence>
<evidence type="ECO:0007829" key="15">
    <source>
        <dbReference type="PDB" id="6KEY"/>
    </source>
</evidence>
<feature type="chain" id="PRO_0000238474" description="SPRY domain-containing SOCS box protein 2">
    <location>
        <begin position="1"/>
        <end position="263"/>
    </location>
</feature>
<feature type="domain" description="B30.2/SPRY" evidence="3">
    <location>
        <begin position="26"/>
        <end position="221"/>
    </location>
</feature>
<feature type="domain" description="SOCS box" evidence="2">
    <location>
        <begin position="222"/>
        <end position="263"/>
    </location>
</feature>
<feature type="region of interest" description="Disordered" evidence="4">
    <location>
        <begin position="1"/>
        <end position="48"/>
    </location>
</feature>
<feature type="compositionally biased region" description="Polar residues" evidence="4">
    <location>
        <begin position="1"/>
        <end position="16"/>
    </location>
</feature>
<feature type="splice variant" id="VSP_057167" description="In isoform 2." evidence="11">
    <original>AEPHSLLHLSRLCVRHNLGDTRLGQVSALPLPPAMKRYLLYQ</original>
    <variation>GEAWGRRGENFLSLVAVVWDGNSSDKSRGDGPSSSLPQPLFSAGKG</variation>
    <location>
        <begin position="222"/>
        <end position="263"/>
    </location>
</feature>
<feature type="mutagenesis site" description="Enhances interaction with PAWR." evidence="7">
    <original>QTDH</original>
    <variation>HSVG</variation>
    <location>
        <begin position="116"/>
        <end position="119"/>
    </location>
</feature>
<feature type="helix" evidence="15">
    <location>
        <begin position="22"/>
        <end position="24"/>
    </location>
</feature>
<feature type="helix" evidence="14">
    <location>
        <begin position="29"/>
        <end position="34"/>
    </location>
</feature>
<feature type="helix" evidence="14">
    <location>
        <begin position="40"/>
        <end position="45"/>
    </location>
</feature>
<feature type="strand" evidence="14">
    <location>
        <begin position="47"/>
        <end position="53"/>
    </location>
</feature>
<feature type="strand" evidence="14">
    <location>
        <begin position="57"/>
        <end position="60"/>
    </location>
</feature>
<feature type="helix" evidence="14">
    <location>
        <begin position="61"/>
        <end position="63"/>
    </location>
</feature>
<feature type="strand" evidence="14">
    <location>
        <begin position="65"/>
        <end position="68"/>
    </location>
</feature>
<feature type="strand" evidence="15">
    <location>
        <begin position="71"/>
        <end position="73"/>
    </location>
</feature>
<feature type="strand" evidence="14">
    <location>
        <begin position="75"/>
        <end position="81"/>
    </location>
</feature>
<feature type="strand" evidence="14">
    <location>
        <begin position="86"/>
        <end position="94"/>
    </location>
</feature>
<feature type="helix" evidence="14">
    <location>
        <begin position="97"/>
        <end position="99"/>
    </location>
</feature>
<feature type="strand" evidence="14">
    <location>
        <begin position="105"/>
        <end position="109"/>
    </location>
</feature>
<feature type="strand" evidence="14">
    <location>
        <begin position="116"/>
        <end position="119"/>
    </location>
</feature>
<feature type="strand" evidence="14">
    <location>
        <begin position="130"/>
        <end position="134"/>
    </location>
</feature>
<feature type="turn" evidence="14">
    <location>
        <begin position="135"/>
        <end position="137"/>
    </location>
</feature>
<feature type="strand" evidence="14">
    <location>
        <begin position="139"/>
        <end position="143"/>
    </location>
</feature>
<feature type="strand" evidence="14">
    <location>
        <begin position="151"/>
        <end position="153"/>
    </location>
</feature>
<feature type="helix" evidence="14">
    <location>
        <begin position="156"/>
        <end position="160"/>
    </location>
</feature>
<feature type="strand" evidence="14">
    <location>
        <begin position="165"/>
        <end position="172"/>
    </location>
</feature>
<feature type="turn" evidence="14">
    <location>
        <begin position="173"/>
        <end position="176"/>
    </location>
</feature>
<feature type="strand" evidence="14">
    <location>
        <begin position="177"/>
        <end position="182"/>
    </location>
</feature>
<feature type="strand" evidence="14">
    <location>
        <begin position="185"/>
        <end position="191"/>
    </location>
</feature>
<feature type="strand" evidence="14">
    <location>
        <begin position="199"/>
        <end position="205"/>
    </location>
</feature>
<feature type="strand" evidence="14">
    <location>
        <begin position="211"/>
        <end position="220"/>
    </location>
</feature>
<accession>Q99619</accession>
<accession>B7Z4W1</accession>
<accession>D3DUT0</accession>
<name>SPSB2_HUMAN</name>
<comment type="function">
    <text evidence="5 9">Substrate recognition component of a SCF-like ECS (Elongin BC-CUL2/5-SOCS-box protein) E3 ubiquitin-protein ligase complex which mediates the ubiquitination and subsequent proteasomal degradation of target proteins (PubMed:15601820, PubMed:21199876). Negatively regulates nitric oxide (NO) production and limits cellular toxicity in activated macrophages by mediating the ubiquitination and proteasomal degradation of NOS2 (PubMed:21199876). Acts as a bridge which links NOS2 with the ECS E3 ubiquitin ligase complex components ELOC and CUL5 (PubMed:21199876).</text>
</comment>
<comment type="pathway">
    <text>Protein modification; protein ubiquitination.</text>
</comment>
<comment type="subunit">
    <text evidence="5 6 7 8 9">Component of the probable ECS(SPSB2) E3 ubiquitin-protein ligase complex which contains CUL5, RNF7/RBX2, Elongin BC complex and SPSB2 (PubMed:15601820). Interacts with CUL5, RNF7, ELOB and ELOC (PubMed:15601820). Interacts with MET (PubMed:15713673). Interacts (via B30.2/SPRY domain) with PAWR; this interaction occurs in association with the Elongin BC complex (PubMed:16498413, PubMed:20561531). Interacts with NOS2 (PubMed:21199876).</text>
</comment>
<comment type="subunit">
    <text evidence="10">(Microbial infection) Interacts (via C-terminus) with HCV envelope glycoprotein E1. Interacts (via C-terminus) with HCV non-structural protein 5A; this interaction targets NS5A for ubiquitination and degradation.</text>
</comment>
<comment type="interaction">
    <interactant intactId="EBI-2323209">
        <id>Q99619</id>
    </interactant>
    <interactant intactId="EBI-10976677">
        <id>G5E9A7</id>
        <label>DMWD</label>
    </interactant>
    <organismsDiffer>false</organismsDiffer>
    <experiments>3</experiments>
</comment>
<comment type="interaction">
    <interactant intactId="EBI-2323209">
        <id>Q99619</id>
    </interactant>
    <interactant intactId="EBI-301231">
        <id>Q15369</id>
        <label>ELOC</label>
    </interactant>
    <organismsDiffer>false</organismsDiffer>
    <experiments>4</experiments>
</comment>
<comment type="interaction">
    <interactant intactId="EBI-2323209">
        <id>Q99619</id>
    </interactant>
    <interactant intactId="EBI-10242151">
        <id>Q53EP0-3</id>
        <label>FNDC3B</label>
    </interactant>
    <organismsDiffer>false</organismsDiffer>
    <experiments>3</experiments>
</comment>
<comment type="interaction">
    <interactant intactId="EBI-2323209">
        <id>Q99619</id>
    </interactant>
    <interactant intactId="EBI-10975473">
        <id>O60333-2</id>
        <label>KIF1B</label>
    </interactant>
    <organismsDiffer>false</organismsDiffer>
    <experiments>3</experiments>
</comment>
<comment type="interaction">
    <interactant intactId="EBI-2323209">
        <id>Q99619</id>
    </interactant>
    <interactant intactId="EBI-11742836">
        <id>Q16656-4</id>
        <label>NRF1</label>
    </interactant>
    <organismsDiffer>false</organismsDiffer>
    <experiments>3</experiments>
</comment>
<comment type="interaction">
    <interactant intactId="EBI-2323209">
        <id>Q99619</id>
    </interactant>
    <interactant intactId="EBI-595869">
        <id>Q96IZ0</id>
        <label>PAWR</label>
    </interactant>
    <organismsDiffer>false</organismsDiffer>
    <experiments>2</experiments>
</comment>
<comment type="interaction">
    <interactant intactId="EBI-2323209">
        <id>Q99619</id>
    </interactant>
    <interactant intactId="EBI-716404">
        <id>P16284</id>
        <label>PECAM1</label>
    </interactant>
    <organismsDiffer>false</organismsDiffer>
    <experiments>3</experiments>
</comment>
<comment type="interaction">
    <interactant intactId="EBI-2323209">
        <id>Q99619</id>
    </interactant>
    <interactant intactId="EBI-79893">
        <id>Q92569</id>
        <label>PIK3R3</label>
    </interactant>
    <organismsDiffer>false</organismsDiffer>
    <experiments>3</experiments>
</comment>
<comment type="interaction">
    <interactant intactId="EBI-2323209">
        <id>Q99619</id>
    </interactant>
    <interactant intactId="EBI-21251460">
        <id>O60260-5</id>
        <label>PRKN</label>
    </interactant>
    <organismsDiffer>false</organismsDiffer>
    <experiments>3</experiments>
</comment>
<comment type="interaction">
    <interactant intactId="EBI-2323209">
        <id>Q99619</id>
    </interactant>
    <interactant intactId="EBI-78738">
        <id>Q99873</id>
        <label>PRMT1</label>
    </interactant>
    <organismsDiffer>false</organismsDiffer>
    <experiments>2</experiments>
</comment>
<comment type="interaction">
    <interactant intactId="EBI-2323209">
        <id>Q99619</id>
    </interactant>
    <interactant intactId="EBI-10253121">
        <id>Q6P9E2</id>
        <label>RECK</label>
    </interactant>
    <organismsDiffer>false</organismsDiffer>
    <experiments>3</experiments>
</comment>
<comment type="interaction">
    <interactant intactId="EBI-2323209">
        <id>Q99619</id>
    </interactant>
    <interactant intactId="EBI-396669">
        <id>Q9Y3C5</id>
        <label>RNF11</label>
    </interactant>
    <organismsDiffer>false</organismsDiffer>
    <experiments>3</experiments>
</comment>
<comment type="interaction">
    <interactant intactId="EBI-2323209">
        <id>Q99619</id>
    </interactant>
    <interactant intactId="EBI-358489">
        <id>Q96GM5</id>
        <label>SMARCD1</label>
    </interactant>
    <organismsDiffer>false</organismsDiffer>
    <experiments>3</experiments>
</comment>
<comment type="interaction">
    <interactant intactId="EBI-2323209">
        <id>Q99619</id>
    </interactant>
    <interactant intactId="EBI-473850">
        <id>P61086</id>
        <label>UBE2K</label>
    </interactant>
    <organismsDiffer>false</organismsDiffer>
    <experiments>3</experiments>
</comment>
<comment type="interaction">
    <interactant intactId="EBI-2323209">
        <id>Q99619</id>
    </interactant>
    <interactant intactId="EBI-353844">
        <id>P08670</id>
        <label>VIM</label>
    </interactant>
    <organismsDiffer>false</organismsDiffer>
    <experiments>3</experiments>
</comment>
<comment type="interaction">
    <interactant intactId="EBI-2323209">
        <id>Q99619</id>
    </interactant>
    <interactant intactId="EBI-134067">
        <id>P09052</id>
        <label>vas</label>
    </interactant>
    <organismsDiffer>true</organismsDiffer>
    <experiments>2</experiments>
</comment>
<comment type="subcellular location">
    <subcellularLocation>
        <location evidence="12">Cytoplasm</location>
    </subcellularLocation>
    <subcellularLocation>
        <location evidence="9">Cytoplasm</location>
        <location evidence="9">Cytosol</location>
    </subcellularLocation>
    <text evidence="9">Exhibits a diffuse cytosolic localization.</text>
</comment>
<comment type="alternative products">
    <event type="alternative splicing"/>
    <isoform>
        <id>Q99619-1</id>
        <name>1</name>
        <sequence type="displayed"/>
    </isoform>
    <isoform>
        <id>Q99619-2</id>
        <name>2</name>
        <sequence type="described" ref="VSP_057167"/>
    </isoform>
</comment>
<comment type="domain">
    <text evidence="1 9">The SOCS box domain mediates the interaction with the Elongin BC complex, an adapter module in different E3 ubiquitin ligase complexes (By similarity). Essential for its ability to link NOS2 and the ECS E3 ubiquitin ligase complex components ELOC and CUL5.</text>
</comment>
<comment type="similarity">
    <text evidence="12">Belongs to the SPSB family.</text>
</comment>
<gene>
    <name type="primary">SPSB2</name>
    <name type="synonym">GRCC9</name>
    <name type="synonym">SSB2</name>
</gene>